<reference key="1">
    <citation type="journal article" date="2005" name="Science">
        <title>Extensive DNA inversions in the B. fragilis genome control variable gene expression.</title>
        <authorList>
            <person name="Cerdeno-Tarraga A.-M."/>
            <person name="Patrick S."/>
            <person name="Crossman L.C."/>
            <person name="Blakely G."/>
            <person name="Abratt V."/>
            <person name="Lennard N."/>
            <person name="Poxton I."/>
            <person name="Duerden B."/>
            <person name="Harris B."/>
            <person name="Quail M.A."/>
            <person name="Barron A."/>
            <person name="Clark L."/>
            <person name="Corton C."/>
            <person name="Doggett J."/>
            <person name="Holden M.T.G."/>
            <person name="Larke N."/>
            <person name="Line A."/>
            <person name="Lord A."/>
            <person name="Norbertczak H."/>
            <person name="Ormond D."/>
            <person name="Price C."/>
            <person name="Rabbinowitsch E."/>
            <person name="Woodward J."/>
            <person name="Barrell B.G."/>
            <person name="Parkhill J."/>
        </authorList>
    </citation>
    <scope>NUCLEOTIDE SEQUENCE [LARGE SCALE GENOMIC DNA]</scope>
    <source>
        <strain>ATCC 25285 / DSM 2151 / CCUG 4856 / JCM 11019 / LMG 10263 / NCTC 9343 / Onslow / VPI 2553 / EN-2</strain>
    </source>
</reference>
<dbReference type="EC" id="2.3.1.234" evidence="1"/>
<dbReference type="EMBL" id="CR626927">
    <property type="protein sequence ID" value="CAH08212.1"/>
    <property type="molecule type" value="Genomic_DNA"/>
</dbReference>
<dbReference type="RefSeq" id="WP_005787941.1">
    <property type="nucleotide sequence ID" value="NZ_UFTH01000001.1"/>
</dbReference>
<dbReference type="SMR" id="Q5LCF3"/>
<dbReference type="PaxDb" id="272559-BF9343_2431"/>
<dbReference type="GeneID" id="60369509"/>
<dbReference type="KEGG" id="bfs:BF9343_2431"/>
<dbReference type="eggNOG" id="COG0533">
    <property type="taxonomic scope" value="Bacteria"/>
</dbReference>
<dbReference type="HOGENOM" id="CLU_023208_0_2_10"/>
<dbReference type="Proteomes" id="UP000006731">
    <property type="component" value="Chromosome"/>
</dbReference>
<dbReference type="GO" id="GO:0005737">
    <property type="term" value="C:cytoplasm"/>
    <property type="evidence" value="ECO:0007669"/>
    <property type="project" value="UniProtKB-SubCell"/>
</dbReference>
<dbReference type="GO" id="GO:0005506">
    <property type="term" value="F:iron ion binding"/>
    <property type="evidence" value="ECO:0007669"/>
    <property type="project" value="UniProtKB-UniRule"/>
</dbReference>
<dbReference type="GO" id="GO:0061711">
    <property type="term" value="F:N(6)-L-threonylcarbamoyladenine synthase activity"/>
    <property type="evidence" value="ECO:0007669"/>
    <property type="project" value="UniProtKB-EC"/>
</dbReference>
<dbReference type="GO" id="GO:0002949">
    <property type="term" value="P:tRNA threonylcarbamoyladenosine modification"/>
    <property type="evidence" value="ECO:0007669"/>
    <property type="project" value="UniProtKB-UniRule"/>
</dbReference>
<dbReference type="CDD" id="cd24133">
    <property type="entry name" value="ASKHA_NBD_TsaD_bac"/>
    <property type="match status" value="1"/>
</dbReference>
<dbReference type="FunFam" id="3.30.420.40:FF:000012">
    <property type="entry name" value="tRNA N6-adenosine threonylcarbamoyltransferase"/>
    <property type="match status" value="1"/>
</dbReference>
<dbReference type="FunFam" id="3.30.420.40:FF:000040">
    <property type="entry name" value="tRNA N6-adenosine threonylcarbamoyltransferase"/>
    <property type="match status" value="1"/>
</dbReference>
<dbReference type="Gene3D" id="3.30.420.40">
    <property type="match status" value="2"/>
</dbReference>
<dbReference type="HAMAP" id="MF_01445">
    <property type="entry name" value="TsaD"/>
    <property type="match status" value="1"/>
</dbReference>
<dbReference type="InterPro" id="IPR043129">
    <property type="entry name" value="ATPase_NBD"/>
</dbReference>
<dbReference type="InterPro" id="IPR000905">
    <property type="entry name" value="Gcp-like_dom"/>
</dbReference>
<dbReference type="InterPro" id="IPR017861">
    <property type="entry name" value="KAE1/TsaD"/>
</dbReference>
<dbReference type="InterPro" id="IPR017860">
    <property type="entry name" value="Peptidase_M22_CS"/>
</dbReference>
<dbReference type="InterPro" id="IPR022450">
    <property type="entry name" value="TsaD"/>
</dbReference>
<dbReference type="NCBIfam" id="TIGR00329">
    <property type="entry name" value="gcp_kae1"/>
    <property type="match status" value="1"/>
</dbReference>
<dbReference type="NCBIfam" id="TIGR03723">
    <property type="entry name" value="T6A_TsaD_YgjD"/>
    <property type="match status" value="1"/>
</dbReference>
<dbReference type="PANTHER" id="PTHR11735">
    <property type="entry name" value="TRNA N6-ADENOSINE THREONYLCARBAMOYLTRANSFERASE"/>
    <property type="match status" value="1"/>
</dbReference>
<dbReference type="PANTHER" id="PTHR11735:SF6">
    <property type="entry name" value="TRNA N6-ADENOSINE THREONYLCARBAMOYLTRANSFERASE, MITOCHONDRIAL"/>
    <property type="match status" value="1"/>
</dbReference>
<dbReference type="Pfam" id="PF00814">
    <property type="entry name" value="TsaD"/>
    <property type="match status" value="1"/>
</dbReference>
<dbReference type="PRINTS" id="PR00789">
    <property type="entry name" value="OSIALOPTASE"/>
</dbReference>
<dbReference type="SUPFAM" id="SSF53067">
    <property type="entry name" value="Actin-like ATPase domain"/>
    <property type="match status" value="2"/>
</dbReference>
<dbReference type="PROSITE" id="PS01016">
    <property type="entry name" value="GLYCOPROTEASE"/>
    <property type="match status" value="1"/>
</dbReference>
<proteinExistence type="inferred from homology"/>
<comment type="function">
    <text evidence="1">Required for the formation of a threonylcarbamoyl group on adenosine at position 37 (t(6)A37) in tRNAs that read codons beginning with adenine. Is involved in the transfer of the threonylcarbamoyl moiety of threonylcarbamoyl-AMP (TC-AMP) to the N6 group of A37, together with TsaE and TsaB. TsaD likely plays a direct catalytic role in this reaction.</text>
</comment>
<comment type="catalytic activity">
    <reaction evidence="1">
        <text>L-threonylcarbamoyladenylate + adenosine(37) in tRNA = N(6)-L-threonylcarbamoyladenosine(37) in tRNA + AMP + H(+)</text>
        <dbReference type="Rhea" id="RHEA:37059"/>
        <dbReference type="Rhea" id="RHEA-COMP:10162"/>
        <dbReference type="Rhea" id="RHEA-COMP:10163"/>
        <dbReference type="ChEBI" id="CHEBI:15378"/>
        <dbReference type="ChEBI" id="CHEBI:73682"/>
        <dbReference type="ChEBI" id="CHEBI:74411"/>
        <dbReference type="ChEBI" id="CHEBI:74418"/>
        <dbReference type="ChEBI" id="CHEBI:456215"/>
        <dbReference type="EC" id="2.3.1.234"/>
    </reaction>
</comment>
<comment type="cofactor">
    <cofactor evidence="1">
        <name>Fe(2+)</name>
        <dbReference type="ChEBI" id="CHEBI:29033"/>
    </cofactor>
    <text evidence="1">Binds 1 Fe(2+) ion per subunit.</text>
</comment>
<comment type="subcellular location">
    <subcellularLocation>
        <location evidence="1">Cytoplasm</location>
    </subcellularLocation>
</comment>
<comment type="similarity">
    <text evidence="1">Belongs to the KAE1 / TsaD family.</text>
</comment>
<sequence length="339" mass="36956">MSTIILGIESSCDDTSAAVIKDGYLLSNVVSSQAVHEAYGGVVPELASRAHQQNIVPVVHEALKRAGVTKEELSAVAFTRGPGLMGSLLVGVSFAKGFARSLNIPMIDVNHLTGHVLAHFIKEEGEANEQPDFPFLCLLVSGGNSQIILVKAYNDMEILGQTIDDAAGEAIDKCSKVMGLGYPGGPIIDRLARQGNPKAYTFSKPHISGLDYSFSGLKTSFLYSLRDWMKEDPDFIEHHKNDLAASLEATVVDILMDKLRKAAKQYKINEVAVAGGVSANNGLRNAFREHAEKYGWKIFIPKFSYTTDNAAMIAITGYFKYQDKDFCSIEQPAYSRVTL</sequence>
<keyword id="KW-0012">Acyltransferase</keyword>
<keyword id="KW-0963">Cytoplasm</keyword>
<keyword id="KW-0408">Iron</keyword>
<keyword id="KW-0479">Metal-binding</keyword>
<keyword id="KW-0808">Transferase</keyword>
<keyword id="KW-0819">tRNA processing</keyword>
<protein>
    <recommendedName>
        <fullName evidence="1">tRNA N6-adenosine threonylcarbamoyltransferase</fullName>
        <ecNumber evidence="1">2.3.1.234</ecNumber>
    </recommendedName>
    <alternativeName>
        <fullName evidence="1">N6-L-threonylcarbamoyladenine synthase</fullName>
        <shortName evidence="1">t(6)A synthase</shortName>
    </alternativeName>
    <alternativeName>
        <fullName evidence="1">t(6)A37 threonylcarbamoyladenosine biosynthesis protein TsaD</fullName>
    </alternativeName>
    <alternativeName>
        <fullName evidence="1">tRNA threonylcarbamoyladenosine biosynthesis protein TsaD</fullName>
    </alternativeName>
</protein>
<evidence type="ECO:0000255" key="1">
    <source>
        <dbReference type="HAMAP-Rule" id="MF_01445"/>
    </source>
</evidence>
<feature type="chain" id="PRO_0000303272" description="tRNA N6-adenosine threonylcarbamoyltransferase">
    <location>
        <begin position="1"/>
        <end position="339"/>
    </location>
</feature>
<feature type="binding site" evidence="1">
    <location>
        <position position="111"/>
    </location>
    <ligand>
        <name>Fe cation</name>
        <dbReference type="ChEBI" id="CHEBI:24875"/>
    </ligand>
</feature>
<feature type="binding site" evidence="1">
    <location>
        <position position="115"/>
    </location>
    <ligand>
        <name>Fe cation</name>
        <dbReference type="ChEBI" id="CHEBI:24875"/>
    </ligand>
</feature>
<feature type="binding site" evidence="1">
    <location>
        <begin position="139"/>
        <end position="143"/>
    </location>
    <ligand>
        <name>substrate</name>
    </ligand>
</feature>
<feature type="binding site" evidence="1">
    <location>
        <position position="172"/>
    </location>
    <ligand>
        <name>substrate</name>
    </ligand>
</feature>
<feature type="binding site" evidence="1">
    <location>
        <position position="185"/>
    </location>
    <ligand>
        <name>substrate</name>
    </ligand>
</feature>
<feature type="binding site" evidence="1">
    <location>
        <position position="189"/>
    </location>
    <ligand>
        <name>substrate</name>
    </ligand>
</feature>
<feature type="binding site" evidence="1">
    <location>
        <position position="280"/>
    </location>
    <ligand>
        <name>substrate</name>
    </ligand>
</feature>
<feature type="binding site" evidence="1">
    <location>
        <position position="308"/>
    </location>
    <ligand>
        <name>Fe cation</name>
        <dbReference type="ChEBI" id="CHEBI:24875"/>
    </ligand>
</feature>
<name>TSAD_BACFN</name>
<organism>
    <name type="scientific">Bacteroides fragilis (strain ATCC 25285 / DSM 2151 / CCUG 4856 / JCM 11019 / LMG 10263 / NCTC 9343 / Onslow / VPI 2553 / EN-2)</name>
    <dbReference type="NCBI Taxonomy" id="272559"/>
    <lineage>
        <taxon>Bacteria</taxon>
        <taxon>Pseudomonadati</taxon>
        <taxon>Bacteroidota</taxon>
        <taxon>Bacteroidia</taxon>
        <taxon>Bacteroidales</taxon>
        <taxon>Bacteroidaceae</taxon>
        <taxon>Bacteroides</taxon>
    </lineage>
</organism>
<gene>
    <name evidence="1" type="primary">tsaD</name>
    <name type="synonym">gcp</name>
    <name type="ordered locus">BF2512</name>
</gene>
<accession>Q5LCF3</accession>